<gene>
    <name type="ORF">SNOG_01444</name>
</gene>
<dbReference type="EC" id="4.2.3.4" evidence="1"/>
<dbReference type="EC" id="2.5.1.19" evidence="1"/>
<dbReference type="EC" id="2.7.1.71" evidence="1"/>
<dbReference type="EC" id="4.2.1.10" evidence="1"/>
<dbReference type="EC" id="1.1.1.25" evidence="1"/>
<dbReference type="EMBL" id="CH445326">
    <property type="protein sequence ID" value="EAT91093.2"/>
    <property type="molecule type" value="Genomic_DNA"/>
</dbReference>
<dbReference type="RefSeq" id="XP_001792082.1">
    <property type="nucleotide sequence ID" value="XM_001792030.1"/>
</dbReference>
<dbReference type="SMR" id="Q0V3H0"/>
<dbReference type="FunCoup" id="Q0V3H0">
    <property type="interactions" value="425"/>
</dbReference>
<dbReference type="STRING" id="321614.Q0V3H0"/>
<dbReference type="EnsemblFungi" id="SNOT_01444">
    <property type="protein sequence ID" value="SNOT_01444"/>
    <property type="gene ID" value="SNOG_01444"/>
</dbReference>
<dbReference type="GeneID" id="5968927"/>
<dbReference type="KEGG" id="pno:SNOG_01444"/>
<dbReference type="VEuPathDB" id="FungiDB:JI435_014440"/>
<dbReference type="eggNOG" id="KOG0692">
    <property type="taxonomic scope" value="Eukaryota"/>
</dbReference>
<dbReference type="HOGENOM" id="CLU_001201_1_2_1"/>
<dbReference type="InParanoid" id="Q0V3H0"/>
<dbReference type="UniPathway" id="UPA00053">
    <property type="reaction ID" value="UER00085"/>
</dbReference>
<dbReference type="UniPathway" id="UPA00053">
    <property type="reaction ID" value="UER00086"/>
</dbReference>
<dbReference type="UniPathway" id="UPA00053">
    <property type="reaction ID" value="UER00087"/>
</dbReference>
<dbReference type="UniPathway" id="UPA00053">
    <property type="reaction ID" value="UER00088"/>
</dbReference>
<dbReference type="UniPathway" id="UPA00053">
    <property type="reaction ID" value="UER00089"/>
</dbReference>
<dbReference type="Proteomes" id="UP000001055">
    <property type="component" value="Unassembled WGS sequence"/>
</dbReference>
<dbReference type="GO" id="GO:0005737">
    <property type="term" value="C:cytoplasm"/>
    <property type="evidence" value="ECO:0007669"/>
    <property type="project" value="UniProtKB-SubCell"/>
</dbReference>
<dbReference type="GO" id="GO:0003855">
    <property type="term" value="F:3-dehydroquinate dehydratase activity"/>
    <property type="evidence" value="ECO:0007669"/>
    <property type="project" value="UniProtKB-UniRule"/>
</dbReference>
<dbReference type="GO" id="GO:0003856">
    <property type="term" value="F:3-dehydroquinate synthase activity"/>
    <property type="evidence" value="ECO:0007669"/>
    <property type="project" value="UniProtKB-UniRule"/>
</dbReference>
<dbReference type="GO" id="GO:0003866">
    <property type="term" value="F:3-phosphoshikimate 1-carboxyvinyltransferase activity"/>
    <property type="evidence" value="ECO:0000318"/>
    <property type="project" value="GO_Central"/>
</dbReference>
<dbReference type="GO" id="GO:0005524">
    <property type="term" value="F:ATP binding"/>
    <property type="evidence" value="ECO:0007669"/>
    <property type="project" value="UniProtKB-UniRule"/>
</dbReference>
<dbReference type="GO" id="GO:0046872">
    <property type="term" value="F:metal ion binding"/>
    <property type="evidence" value="ECO:0007669"/>
    <property type="project" value="UniProtKB-UniRule"/>
</dbReference>
<dbReference type="GO" id="GO:0004764">
    <property type="term" value="F:shikimate 3-dehydrogenase (NADP+) activity"/>
    <property type="evidence" value="ECO:0007669"/>
    <property type="project" value="UniProtKB-UniRule"/>
</dbReference>
<dbReference type="GO" id="GO:0004765">
    <property type="term" value="F:shikimate kinase activity"/>
    <property type="evidence" value="ECO:0007669"/>
    <property type="project" value="UniProtKB-UniRule"/>
</dbReference>
<dbReference type="GO" id="GO:0008652">
    <property type="term" value="P:amino acid biosynthetic process"/>
    <property type="evidence" value="ECO:0007669"/>
    <property type="project" value="UniProtKB-KW"/>
</dbReference>
<dbReference type="GO" id="GO:0009073">
    <property type="term" value="P:aromatic amino acid family biosynthetic process"/>
    <property type="evidence" value="ECO:0007669"/>
    <property type="project" value="UniProtKB-UniRule"/>
</dbReference>
<dbReference type="GO" id="GO:0009423">
    <property type="term" value="P:chorismate biosynthetic process"/>
    <property type="evidence" value="ECO:0000318"/>
    <property type="project" value="GO_Central"/>
</dbReference>
<dbReference type="CDD" id="cd00502">
    <property type="entry name" value="DHQase_I"/>
    <property type="match status" value="1"/>
</dbReference>
<dbReference type="CDD" id="cd08195">
    <property type="entry name" value="DHQS"/>
    <property type="match status" value="1"/>
</dbReference>
<dbReference type="CDD" id="cd01556">
    <property type="entry name" value="EPSP_synthase"/>
    <property type="match status" value="1"/>
</dbReference>
<dbReference type="CDD" id="cd00464">
    <property type="entry name" value="SK"/>
    <property type="match status" value="1"/>
</dbReference>
<dbReference type="FunFam" id="1.20.1090.10:FF:000007">
    <property type="entry name" value="Pentafunctional AROM polypeptide"/>
    <property type="match status" value="1"/>
</dbReference>
<dbReference type="FunFam" id="3.20.20.70:FF:000135">
    <property type="entry name" value="Pentafunctional AROM polypeptide"/>
    <property type="match status" value="1"/>
</dbReference>
<dbReference type="FunFam" id="3.40.50.1970:FF:000007">
    <property type="entry name" value="Pentafunctional AROM polypeptide"/>
    <property type="match status" value="1"/>
</dbReference>
<dbReference type="FunFam" id="3.40.50.300:FF:001256">
    <property type="entry name" value="Pentafunctional AROM polypeptide"/>
    <property type="match status" value="1"/>
</dbReference>
<dbReference type="FunFam" id="3.40.50.720:FF:000483">
    <property type="entry name" value="Pentafunctional AROM polypeptide"/>
    <property type="match status" value="1"/>
</dbReference>
<dbReference type="FunFam" id="3.65.10.10:FF:000007">
    <property type="entry name" value="Pentafunctional AROM polypeptide"/>
    <property type="match status" value="1"/>
</dbReference>
<dbReference type="FunFam" id="3.65.10.10:FF:000008">
    <property type="entry name" value="Pentafunctional AROM polypeptide"/>
    <property type="match status" value="1"/>
</dbReference>
<dbReference type="Gene3D" id="3.40.50.1970">
    <property type="match status" value="1"/>
</dbReference>
<dbReference type="Gene3D" id="3.20.20.70">
    <property type="entry name" value="Aldolase class I"/>
    <property type="match status" value="1"/>
</dbReference>
<dbReference type="Gene3D" id="1.20.1090.10">
    <property type="entry name" value="Dehydroquinate synthase-like - alpha domain"/>
    <property type="match status" value="1"/>
</dbReference>
<dbReference type="Gene3D" id="3.65.10.10">
    <property type="entry name" value="Enolpyruvate transferase domain"/>
    <property type="match status" value="2"/>
</dbReference>
<dbReference type="Gene3D" id="3.40.50.10860">
    <property type="entry name" value="Leucine Dehydrogenase, chain A, domain 1"/>
    <property type="match status" value="1"/>
</dbReference>
<dbReference type="Gene3D" id="3.40.50.720">
    <property type="entry name" value="NAD(P)-binding Rossmann-like Domain"/>
    <property type="match status" value="1"/>
</dbReference>
<dbReference type="Gene3D" id="3.40.50.300">
    <property type="entry name" value="P-loop containing nucleotide triphosphate hydrolases"/>
    <property type="match status" value="1"/>
</dbReference>
<dbReference type="HAMAP" id="MF_00210">
    <property type="entry name" value="EPSP_synth"/>
    <property type="match status" value="1"/>
</dbReference>
<dbReference type="HAMAP" id="MF_03143">
    <property type="entry name" value="Pentafunct_AroM"/>
    <property type="match status" value="1"/>
</dbReference>
<dbReference type="HAMAP" id="MF_00109">
    <property type="entry name" value="Shikimate_kinase"/>
    <property type="match status" value="1"/>
</dbReference>
<dbReference type="InterPro" id="IPR018508">
    <property type="entry name" value="3-dehydroquinate_DH_AS"/>
</dbReference>
<dbReference type="InterPro" id="IPR013785">
    <property type="entry name" value="Aldolase_TIM"/>
</dbReference>
<dbReference type="InterPro" id="IPR046346">
    <property type="entry name" value="Aminoacid_DH-like_N_sf"/>
</dbReference>
<dbReference type="InterPro" id="IPR016037">
    <property type="entry name" value="DHQ_synth_AroB"/>
</dbReference>
<dbReference type="InterPro" id="IPR030960">
    <property type="entry name" value="DHQS/DOIS_N"/>
</dbReference>
<dbReference type="InterPro" id="IPR056179">
    <property type="entry name" value="DHQS_C"/>
</dbReference>
<dbReference type="InterPro" id="IPR001381">
    <property type="entry name" value="DHquinase_I"/>
</dbReference>
<dbReference type="InterPro" id="IPR001986">
    <property type="entry name" value="Enolpyruvate_Tfrase_dom"/>
</dbReference>
<dbReference type="InterPro" id="IPR036968">
    <property type="entry name" value="Enolpyruvate_Tfrase_sf"/>
</dbReference>
<dbReference type="InterPro" id="IPR006264">
    <property type="entry name" value="EPSP_synthase"/>
</dbReference>
<dbReference type="InterPro" id="IPR023193">
    <property type="entry name" value="EPSP_synthase_CS"/>
</dbReference>
<dbReference type="InterPro" id="IPR036291">
    <property type="entry name" value="NAD(P)-bd_dom_sf"/>
</dbReference>
<dbReference type="InterPro" id="IPR027417">
    <property type="entry name" value="P-loop_NTPase"/>
</dbReference>
<dbReference type="InterPro" id="IPR008289">
    <property type="entry name" value="Pentafunct_AroM"/>
</dbReference>
<dbReference type="InterPro" id="IPR013792">
    <property type="entry name" value="RNA3'P_cycl/enolpyr_Trfase_a/b"/>
</dbReference>
<dbReference type="InterPro" id="IPR041121">
    <property type="entry name" value="SDH_C"/>
</dbReference>
<dbReference type="InterPro" id="IPR031322">
    <property type="entry name" value="Shikimate/glucono_kinase"/>
</dbReference>
<dbReference type="InterPro" id="IPR013708">
    <property type="entry name" value="Shikimate_DH-bd_N"/>
</dbReference>
<dbReference type="InterPro" id="IPR010110">
    <property type="entry name" value="Shikimate_DH_AroM-type"/>
</dbReference>
<dbReference type="InterPro" id="IPR000623">
    <property type="entry name" value="Shikimate_kinase/TSH1"/>
</dbReference>
<dbReference type="InterPro" id="IPR023000">
    <property type="entry name" value="Shikimate_kinase_CS"/>
</dbReference>
<dbReference type="NCBIfam" id="TIGR01356">
    <property type="entry name" value="aroA"/>
    <property type="match status" value="1"/>
</dbReference>
<dbReference type="NCBIfam" id="TIGR01357">
    <property type="entry name" value="aroB"/>
    <property type="match status" value="1"/>
</dbReference>
<dbReference type="NCBIfam" id="TIGR01093">
    <property type="entry name" value="aroD"/>
    <property type="match status" value="1"/>
</dbReference>
<dbReference type="NCBIfam" id="TIGR01809">
    <property type="entry name" value="Shik-DH-AROM"/>
    <property type="match status" value="1"/>
</dbReference>
<dbReference type="PANTHER" id="PTHR21090">
    <property type="entry name" value="AROM/DEHYDROQUINATE SYNTHASE"/>
    <property type="match status" value="1"/>
</dbReference>
<dbReference type="PANTHER" id="PTHR21090:SF5">
    <property type="entry name" value="PENTAFUNCTIONAL AROM POLYPEPTIDE"/>
    <property type="match status" value="1"/>
</dbReference>
<dbReference type="Pfam" id="PF01761">
    <property type="entry name" value="DHQ_synthase"/>
    <property type="match status" value="1"/>
</dbReference>
<dbReference type="Pfam" id="PF24621">
    <property type="entry name" value="DHQS_C"/>
    <property type="match status" value="1"/>
</dbReference>
<dbReference type="Pfam" id="PF01487">
    <property type="entry name" value="DHquinase_I"/>
    <property type="match status" value="1"/>
</dbReference>
<dbReference type="Pfam" id="PF00275">
    <property type="entry name" value="EPSP_synthase"/>
    <property type="match status" value="1"/>
</dbReference>
<dbReference type="Pfam" id="PF18317">
    <property type="entry name" value="SDH_C"/>
    <property type="match status" value="1"/>
</dbReference>
<dbReference type="Pfam" id="PF08501">
    <property type="entry name" value="Shikimate_dh_N"/>
    <property type="match status" value="1"/>
</dbReference>
<dbReference type="Pfam" id="PF01202">
    <property type="entry name" value="SKI"/>
    <property type="match status" value="1"/>
</dbReference>
<dbReference type="PIRSF" id="PIRSF000514">
    <property type="entry name" value="Pentafunct_AroM"/>
    <property type="match status" value="1"/>
</dbReference>
<dbReference type="PRINTS" id="PR01100">
    <property type="entry name" value="SHIKIMTKNASE"/>
</dbReference>
<dbReference type="SUPFAM" id="SSF51569">
    <property type="entry name" value="Aldolase"/>
    <property type="match status" value="1"/>
</dbReference>
<dbReference type="SUPFAM" id="SSF53223">
    <property type="entry name" value="Aminoacid dehydrogenase-like, N-terminal domain"/>
    <property type="match status" value="1"/>
</dbReference>
<dbReference type="SUPFAM" id="SSF56796">
    <property type="entry name" value="Dehydroquinate synthase-like"/>
    <property type="match status" value="1"/>
</dbReference>
<dbReference type="SUPFAM" id="SSF55205">
    <property type="entry name" value="EPT/RTPC-like"/>
    <property type="match status" value="1"/>
</dbReference>
<dbReference type="SUPFAM" id="SSF51735">
    <property type="entry name" value="NAD(P)-binding Rossmann-fold domains"/>
    <property type="match status" value="1"/>
</dbReference>
<dbReference type="SUPFAM" id="SSF52540">
    <property type="entry name" value="P-loop containing nucleoside triphosphate hydrolases"/>
    <property type="match status" value="1"/>
</dbReference>
<dbReference type="PROSITE" id="PS01028">
    <property type="entry name" value="DEHYDROQUINASE_I"/>
    <property type="match status" value="1"/>
</dbReference>
<dbReference type="PROSITE" id="PS00104">
    <property type="entry name" value="EPSP_SYNTHASE_1"/>
    <property type="match status" value="1"/>
</dbReference>
<dbReference type="PROSITE" id="PS00885">
    <property type="entry name" value="EPSP_SYNTHASE_2"/>
    <property type="match status" value="1"/>
</dbReference>
<dbReference type="PROSITE" id="PS01128">
    <property type="entry name" value="SHIKIMATE_KINASE"/>
    <property type="match status" value="1"/>
</dbReference>
<comment type="function">
    <text evidence="1">The AROM polypeptide catalyzes 5 consecutive enzymatic reactions in prechorismate polyaromatic amino acid biosynthesis.</text>
</comment>
<comment type="catalytic activity">
    <reaction evidence="1">
        <text>7-phospho-2-dehydro-3-deoxy-D-arabino-heptonate = 3-dehydroquinate + phosphate</text>
        <dbReference type="Rhea" id="RHEA:21968"/>
        <dbReference type="ChEBI" id="CHEBI:32364"/>
        <dbReference type="ChEBI" id="CHEBI:43474"/>
        <dbReference type="ChEBI" id="CHEBI:58394"/>
        <dbReference type="EC" id="4.2.3.4"/>
    </reaction>
</comment>
<comment type="catalytic activity">
    <reaction evidence="1">
        <text>3-dehydroquinate = 3-dehydroshikimate + H2O</text>
        <dbReference type="Rhea" id="RHEA:21096"/>
        <dbReference type="ChEBI" id="CHEBI:15377"/>
        <dbReference type="ChEBI" id="CHEBI:16630"/>
        <dbReference type="ChEBI" id="CHEBI:32364"/>
        <dbReference type="EC" id="4.2.1.10"/>
    </reaction>
</comment>
<comment type="catalytic activity">
    <reaction evidence="1">
        <text>shikimate + NADP(+) = 3-dehydroshikimate + NADPH + H(+)</text>
        <dbReference type="Rhea" id="RHEA:17737"/>
        <dbReference type="ChEBI" id="CHEBI:15378"/>
        <dbReference type="ChEBI" id="CHEBI:16630"/>
        <dbReference type="ChEBI" id="CHEBI:36208"/>
        <dbReference type="ChEBI" id="CHEBI:57783"/>
        <dbReference type="ChEBI" id="CHEBI:58349"/>
        <dbReference type="EC" id="1.1.1.25"/>
    </reaction>
</comment>
<comment type="catalytic activity">
    <reaction evidence="1">
        <text>shikimate + ATP = 3-phosphoshikimate + ADP + H(+)</text>
        <dbReference type="Rhea" id="RHEA:13121"/>
        <dbReference type="ChEBI" id="CHEBI:15378"/>
        <dbReference type="ChEBI" id="CHEBI:30616"/>
        <dbReference type="ChEBI" id="CHEBI:36208"/>
        <dbReference type="ChEBI" id="CHEBI:145989"/>
        <dbReference type="ChEBI" id="CHEBI:456216"/>
        <dbReference type="EC" id="2.7.1.71"/>
    </reaction>
</comment>
<comment type="catalytic activity">
    <reaction evidence="1">
        <text>3-phosphoshikimate + phosphoenolpyruvate = 5-O-(1-carboxyvinyl)-3-phosphoshikimate + phosphate</text>
        <dbReference type="Rhea" id="RHEA:21256"/>
        <dbReference type="ChEBI" id="CHEBI:43474"/>
        <dbReference type="ChEBI" id="CHEBI:57701"/>
        <dbReference type="ChEBI" id="CHEBI:58702"/>
        <dbReference type="ChEBI" id="CHEBI:145989"/>
        <dbReference type="EC" id="2.5.1.19"/>
    </reaction>
</comment>
<comment type="cofactor">
    <cofactor>
        <name>Zn(2+)</name>
        <dbReference type="ChEBI" id="CHEBI:29105"/>
    </cofactor>
    <text>Binds 2 Zn(2+) ions per subunit.</text>
</comment>
<comment type="pathway">
    <text evidence="1">Metabolic intermediate biosynthesis; chorismate biosynthesis; chorismate from D-erythrose 4-phosphate and phosphoenolpyruvate: step 2/7.</text>
</comment>
<comment type="pathway">
    <text evidence="1">Metabolic intermediate biosynthesis; chorismate biosynthesis; chorismate from D-erythrose 4-phosphate and phosphoenolpyruvate: step 3/7.</text>
</comment>
<comment type="pathway">
    <text evidence="1">Metabolic intermediate biosynthesis; chorismate biosynthesis; chorismate from D-erythrose 4-phosphate and phosphoenolpyruvate: step 4/7.</text>
</comment>
<comment type="pathway">
    <text evidence="1">Metabolic intermediate biosynthesis; chorismate biosynthesis; chorismate from D-erythrose 4-phosphate and phosphoenolpyruvate: step 5/7.</text>
</comment>
<comment type="pathway">
    <text evidence="1">Metabolic intermediate biosynthesis; chorismate biosynthesis; chorismate from D-erythrose 4-phosphate and phosphoenolpyruvate: step 6/7.</text>
</comment>
<comment type="subunit">
    <text evidence="1">Homodimer.</text>
</comment>
<comment type="subcellular location">
    <subcellularLocation>
        <location evidence="1">Cytoplasm</location>
    </subcellularLocation>
</comment>
<comment type="similarity">
    <text evidence="1">In the N-terminal section; belongs to the sugar phosphate cyclases superfamily. Dehydroquinate synthase family.</text>
</comment>
<comment type="similarity">
    <text evidence="1">In the 2nd section; belongs to the EPSP synthase family.</text>
</comment>
<comment type="similarity">
    <text evidence="1">In the 3rd section; belongs to the shikimate kinase family.</text>
</comment>
<comment type="similarity">
    <text evidence="1">In the 4th section; belongs to the type-I 3-dehydroquinase family.</text>
</comment>
<comment type="similarity">
    <text evidence="1">In the C-terminal section; belongs to the shikimate dehydrogenase family.</text>
</comment>
<feature type="chain" id="PRO_0000406734" description="Pentafunctional AROM polypeptide">
    <location>
        <begin position="1"/>
        <end position="1661"/>
    </location>
</feature>
<feature type="region of interest" description="3-dehydroquinate synthase">
    <location>
        <begin position="1"/>
        <end position="388"/>
    </location>
</feature>
<feature type="region of interest" description="EPSP synthase">
    <location>
        <begin position="401"/>
        <end position="850"/>
    </location>
</feature>
<feature type="region of interest" description="Shikimate kinase">
    <location>
        <begin position="872"/>
        <end position="1064"/>
    </location>
</feature>
<feature type="region of interest" description="3-dehydroquinase">
    <location>
        <begin position="1065"/>
        <end position="1285"/>
    </location>
</feature>
<feature type="region of interest" description="Shikimate dehydrogenase">
    <location>
        <begin position="1298"/>
        <end position="1661"/>
    </location>
</feature>
<feature type="active site" description="Proton acceptor; for 3-dehydroquinate synthase activity" evidence="1">
    <location>
        <position position="264"/>
    </location>
</feature>
<feature type="active site" description="Proton acceptor; for 3-dehydroquinate synthase activity" evidence="1">
    <location>
        <position position="279"/>
    </location>
</feature>
<feature type="active site" description="For EPSP synthase activity" evidence="1">
    <location>
        <position position="832"/>
    </location>
</feature>
<feature type="active site" description="Proton acceptor; for 3-dehydroquinate dehydratase activity" evidence="1">
    <location>
        <position position="1188"/>
    </location>
</feature>
<feature type="active site" description="Schiff-base intermediate with substrate; for 3-dehydroquinate dehydratase activity" evidence="1">
    <location>
        <position position="1216"/>
    </location>
</feature>
<feature type="binding site" evidence="1">
    <location>
        <begin position="50"/>
        <end position="52"/>
    </location>
    <ligand>
        <name>NAD(+)</name>
        <dbReference type="ChEBI" id="CHEBI:57540"/>
    </ligand>
</feature>
<feature type="binding site" evidence="1">
    <location>
        <begin position="87"/>
        <end position="90"/>
    </location>
    <ligand>
        <name>NAD(+)</name>
        <dbReference type="ChEBI" id="CHEBI:57540"/>
    </ligand>
</feature>
<feature type="binding site" evidence="1">
    <location>
        <begin position="118"/>
        <end position="120"/>
    </location>
    <ligand>
        <name>NAD(+)</name>
        <dbReference type="ChEBI" id="CHEBI:57540"/>
    </ligand>
</feature>
<feature type="binding site" evidence="1">
    <location>
        <position position="123"/>
    </location>
    <ligand>
        <name>NAD(+)</name>
        <dbReference type="ChEBI" id="CHEBI:57540"/>
    </ligand>
</feature>
<feature type="binding site" evidence="1">
    <location>
        <position position="134"/>
    </location>
    <ligand>
        <name>7-phospho-2-dehydro-3-deoxy-D-arabino-heptonate</name>
        <dbReference type="ChEBI" id="CHEBI:58394"/>
    </ligand>
</feature>
<feature type="binding site" evidence="1">
    <location>
        <begin position="143"/>
        <end position="144"/>
    </location>
    <ligand>
        <name>NAD(+)</name>
        <dbReference type="ChEBI" id="CHEBI:57540"/>
    </ligand>
</feature>
<feature type="binding site" evidence="1">
    <location>
        <position position="150"/>
    </location>
    <ligand>
        <name>7-phospho-2-dehydro-3-deoxy-D-arabino-heptonate</name>
        <dbReference type="ChEBI" id="CHEBI:58394"/>
    </ligand>
</feature>
<feature type="binding site" evidence="1">
    <location>
        <position position="156"/>
    </location>
    <ligand>
        <name>7-phospho-2-dehydro-3-deoxy-D-arabino-heptonate</name>
        <dbReference type="ChEBI" id="CHEBI:58394"/>
    </ligand>
</feature>
<feature type="binding site" evidence="1">
    <location>
        <position position="165"/>
    </location>
    <ligand>
        <name>NAD(+)</name>
        <dbReference type="ChEBI" id="CHEBI:57540"/>
    </ligand>
</feature>
<feature type="binding site" evidence="1">
    <location>
        <position position="166"/>
    </location>
    <ligand>
        <name>7-phospho-2-dehydro-3-deoxy-D-arabino-heptonate</name>
        <dbReference type="ChEBI" id="CHEBI:58394"/>
    </ligand>
</feature>
<feature type="binding site" evidence="1">
    <location>
        <begin position="183"/>
        <end position="186"/>
    </location>
    <ligand>
        <name>NAD(+)</name>
        <dbReference type="ChEBI" id="CHEBI:57540"/>
    </ligand>
</feature>
<feature type="binding site" evidence="1">
    <location>
        <position position="194"/>
    </location>
    <ligand>
        <name>NAD(+)</name>
        <dbReference type="ChEBI" id="CHEBI:57540"/>
    </ligand>
</feature>
<feature type="binding site" evidence="1">
    <location>
        <begin position="198"/>
        <end position="201"/>
    </location>
    <ligand>
        <name>7-phospho-2-dehydro-3-deoxy-D-arabino-heptonate</name>
        <dbReference type="ChEBI" id="CHEBI:58394"/>
    </ligand>
</feature>
<feature type="binding site" evidence="1">
    <location>
        <position position="198"/>
    </location>
    <ligand>
        <name>Zn(2+)</name>
        <dbReference type="ChEBI" id="CHEBI:29105"/>
        <note>catalytic</note>
    </ligand>
</feature>
<feature type="binding site" evidence="1">
    <location>
        <position position="254"/>
    </location>
    <ligand>
        <name>7-phospho-2-dehydro-3-deoxy-D-arabino-heptonate</name>
        <dbReference type="ChEBI" id="CHEBI:58394"/>
    </ligand>
</feature>
<feature type="binding site" evidence="1">
    <location>
        <begin position="268"/>
        <end position="272"/>
    </location>
    <ligand>
        <name>7-phospho-2-dehydro-3-deoxy-D-arabino-heptonate</name>
        <dbReference type="ChEBI" id="CHEBI:58394"/>
    </ligand>
</feature>
<feature type="binding site" evidence="1">
    <location>
        <position position="275"/>
    </location>
    <ligand>
        <name>7-phospho-2-dehydro-3-deoxy-D-arabino-heptonate</name>
        <dbReference type="ChEBI" id="CHEBI:58394"/>
    </ligand>
</feature>
<feature type="binding site" evidence="1">
    <location>
        <position position="275"/>
    </location>
    <ligand>
        <name>Zn(2+)</name>
        <dbReference type="ChEBI" id="CHEBI:29105"/>
        <note>catalytic</note>
    </ligand>
</feature>
<feature type="binding site" evidence="1">
    <location>
        <position position="291"/>
    </location>
    <ligand>
        <name>7-phospho-2-dehydro-3-deoxy-D-arabino-heptonate</name>
        <dbReference type="ChEBI" id="CHEBI:58394"/>
    </ligand>
</feature>
<feature type="binding site" evidence="1">
    <location>
        <position position="291"/>
    </location>
    <ligand>
        <name>Zn(2+)</name>
        <dbReference type="ChEBI" id="CHEBI:29105"/>
        <note>catalytic</note>
    </ligand>
</feature>
<feature type="binding site" evidence="1">
    <location>
        <position position="360"/>
    </location>
    <ligand>
        <name>7-phospho-2-dehydro-3-deoxy-D-arabino-heptonate</name>
        <dbReference type="ChEBI" id="CHEBI:58394"/>
    </ligand>
</feature>
<feature type="binding site" evidence="1">
    <location>
        <begin position="879"/>
        <end position="886"/>
    </location>
    <ligand>
        <name>ATP</name>
        <dbReference type="ChEBI" id="CHEBI:30616"/>
    </ligand>
</feature>
<accession>Q0V3H0</accession>
<keyword id="KW-0028">Amino-acid biosynthesis</keyword>
<keyword id="KW-0057">Aromatic amino acid biosynthesis</keyword>
<keyword id="KW-0067">ATP-binding</keyword>
<keyword id="KW-0963">Cytoplasm</keyword>
<keyword id="KW-0418">Kinase</keyword>
<keyword id="KW-0456">Lyase</keyword>
<keyword id="KW-0479">Metal-binding</keyword>
<keyword id="KW-0511">Multifunctional enzyme</keyword>
<keyword id="KW-0521">NADP</keyword>
<keyword id="KW-0547">Nucleotide-binding</keyword>
<keyword id="KW-0560">Oxidoreductase</keyword>
<keyword id="KW-0808">Transferase</keyword>
<keyword id="KW-0862">Zinc</keyword>
<organism>
    <name type="scientific">Phaeosphaeria nodorum (strain SN15 / ATCC MYA-4574 / FGSC 10173)</name>
    <name type="common">Glume blotch fungus</name>
    <name type="synonym">Parastagonospora nodorum</name>
    <dbReference type="NCBI Taxonomy" id="321614"/>
    <lineage>
        <taxon>Eukaryota</taxon>
        <taxon>Fungi</taxon>
        <taxon>Dikarya</taxon>
        <taxon>Ascomycota</taxon>
        <taxon>Pezizomycotina</taxon>
        <taxon>Dothideomycetes</taxon>
        <taxon>Pleosporomycetidae</taxon>
        <taxon>Pleosporales</taxon>
        <taxon>Pleosporineae</taxon>
        <taxon>Phaeosphaeriaceae</taxon>
        <taxon>Parastagonospora</taxon>
    </lineage>
</organism>
<protein>
    <recommendedName>
        <fullName evidence="1">Pentafunctional AROM polypeptide</fullName>
    </recommendedName>
    <domain>
        <recommendedName>
            <fullName evidence="1">3-dehydroquinate synthase</fullName>
            <shortName evidence="1">DHQS</shortName>
            <ecNumber evidence="1">4.2.3.4</ecNumber>
        </recommendedName>
    </domain>
    <domain>
        <recommendedName>
            <fullName evidence="1">3-phosphoshikimate 1-carboxyvinyltransferase</fullName>
            <ecNumber evidence="1">2.5.1.19</ecNumber>
        </recommendedName>
        <alternativeName>
            <fullName evidence="1">5-enolpyruvylshikimate-3-phosphate synthase</fullName>
            <shortName evidence="1">EPSP synthase</shortName>
            <shortName evidence="1">EPSPS</shortName>
        </alternativeName>
    </domain>
    <domain>
        <recommendedName>
            <fullName evidence="1">Shikimate kinase</fullName>
            <shortName evidence="1">SK</shortName>
            <ecNumber evidence="1">2.7.1.71</ecNumber>
        </recommendedName>
    </domain>
    <domain>
        <recommendedName>
            <fullName evidence="1">3-dehydroquinate dehydratase</fullName>
            <shortName evidence="1">3-dehydroquinase</shortName>
            <ecNumber evidence="1">4.2.1.10</ecNumber>
        </recommendedName>
    </domain>
    <domain>
        <recommendedName>
            <fullName evidence="1">Shikimate dehydrogenase</fullName>
            <ecNumber evidence="1">1.1.1.25</ecNumber>
        </recommendedName>
    </domain>
</protein>
<evidence type="ECO:0000255" key="1">
    <source>
        <dbReference type="HAMAP-Rule" id="MF_03143"/>
    </source>
</evidence>
<proteinExistence type="inferred from homology"/>
<reference key="1">
    <citation type="journal article" date="2007" name="Plant Cell">
        <title>Dothideomycete-plant interactions illuminated by genome sequencing and EST analysis of the wheat pathogen Stagonospora nodorum.</title>
        <authorList>
            <person name="Hane J.K."/>
            <person name="Lowe R.G.T."/>
            <person name="Solomon P.S."/>
            <person name="Tan K.-C."/>
            <person name="Schoch C.L."/>
            <person name="Spatafora J.W."/>
            <person name="Crous P.W."/>
            <person name="Kodira C.D."/>
            <person name="Birren B.W."/>
            <person name="Galagan J.E."/>
            <person name="Torriani S.F.F."/>
            <person name="McDonald B.A."/>
            <person name="Oliver R.P."/>
        </authorList>
    </citation>
    <scope>NUCLEOTIDE SEQUENCE [LARGE SCALE GENOMIC DNA]</scope>
    <source>
        <strain>SN15 / ATCC MYA-4574 / FGSC 10173</strain>
    </source>
</reference>
<sequence length="1661" mass="180233">MATNGVKAEPTKVNILGKDSIVVDYGLWQSYIAEDLLQNIPSSTYVLITDTNIGPTYTPTFERSFSAAAASIASSPRLLTYTIPPGETSKSRSTKAAVEDWLLSQGCTRDTVIIALGGGVIGDMIGYVAATYMRGIKFVNVPTTLLAMVDSSIGGKTAIDVPAGKNLVGAFWQPERIYIDLQFLETLPKREVINGMAEVVKTAAIWNEEEFTALEGNADAILAAMDQKTTDGRRNFDSIAGILKRIVLGSVRVKAEVVSADEREGGLRNLLNFGHSIGHAYEAILTPQILHGECVAIGMVKEAELARYLGVLDPSAVARLTKCIASYGLPTSLADKTVRRRSANKHCPVDELIKIMAVDKKNAGAVKKIVLLSGIGRTYEKKASSVVDRDIKIALSPSISVHPGIPSDLNVTCTPPGSKSVSNRVLVLAALGTGSCRITNLLHSDDTQVMLDALAKMQGASFSWENDGKELVVTGNGGQLKASSNELYLGNAGTAARFLTSVTALCQAQEGVTSTVVTGNARMKERPIGPLVKSLRTMGIDVDYQEKEGSLPLRISACGGFGSEAFSGEIELTANVSSQYVSSILLSAPYSKKPVTLRLVGGKVISQPYIDMTIAMMASFGVQVKRDQSDPNTYRIPNKPYTNPAEYVVESDASSATYPLAIAAITGTTCTVPNIGSGSLQGDARFAIEVLKPMGCKVEQTKTSTTVTGPPRGELKAVKEIDMEPMTDAFLTASVLAAVCSSNGTSTTTRIYGIANQRVKECNRIQAMEDELAKFGITCRQFDDGIEVDGRGYQLDAPKVGIHCYDDHRVAMSFGVLGLVAPEPVLILEKDCTGKTWPGYWDILNQQFKAELTGVEPPQQSHGKKITSKGQQKSIFIIGMRGAGKTTAGGWASRALGWPLIDLDTALEQHMSMTIPEIIKTSGWDGFRKAELELLQRTVKEKPTGHIFACGGGIVEIPEARKILVDYQKSGGIVLLVSRDINKVVEFLQIDKTRPAYVEDMMGVWLRRKPWYVECSNYRFHSQAAGSKALAHTQTEIGRFLNIITGRTSTLQDIKKKKQSFFVCLSAPNLEPCAKDLPEIVVGADAVELRVDLLEDPEGSEGLPTPEFVIEQLTILRNVTTIPVIFTLRTKAQGGKFPDEAYAEARSLYQSAIRLGCEFVDLEMTMPEEVLREVSETRGFTEIIASHHDPKGELSWTNGSWMKYYNRALQYGTVIKLVGVAKSLQDNFALAEFKSWAETAHPTPLIAINMGEHGKLSRILNGFMAPVSHPLLPSATAPGQLSAADIRRGLSLMGEIPTKKFCIFGSPISQSPSPRLHNRLFRETGLPHTYGLHETTDASSIRDIIRAPDFGGASVTIPLKQDVRPLIDGVGPEVEAIGALNTIVPEVSIDESTGKEITRLIGRNTDYLGMILILRNTGAHGVGAGLVIGGGGTSRAAIYALKEMGYGPIYLLGRNAHKIEALKSDFPSSYNLQVITSPEQVSSLDAMPTVAIGTVPADQPLDPTIRETLCAFFEKAKDVKTERGEERILLEMAYKPPVTALIQLSQDAGWKTVNGLEVLVGQGVHQFEYWTGVKPLYSVARLQLLSHHRLPRYSHLNSNYSNHSAHCSTVPAKTSILPYHRPLYTLAFVIKLHGLVAHCRTLRDAFSFSVFLTYSWSLGDW</sequence>
<name>ARO1_PHANO</name>